<keyword id="KW-0687">Ribonucleoprotein</keyword>
<keyword id="KW-0689">Ribosomal protein</keyword>
<keyword id="KW-0694">RNA-binding</keyword>
<keyword id="KW-0699">rRNA-binding</keyword>
<sequence length="165" mass="17801">MALNLQDKQAIVAEVSEVAKGALSAVVADSRGVTVDKMTELRKAGREAGVYMRVVRNTLLRRVVEGTQFECLKDTFVGPTLIAYSMEHPGAAARLFKEFAKANAKFEVKAAAFEGELIPASQIDRLATLPTYEEAIARLMATMKEASAGKLVRTLAAVRDAKEAA</sequence>
<name>RL10_SALSV</name>
<gene>
    <name evidence="1" type="primary">rplJ</name>
    <name type="ordered locus">SeSA_A4361</name>
</gene>
<comment type="function">
    <text evidence="1">Forms part of the ribosomal stalk, playing a central role in the interaction of the ribosome with GTP-bound translation factors.</text>
</comment>
<comment type="subunit">
    <text evidence="1">Part of the ribosomal stalk of the 50S ribosomal subunit. The N-terminus interacts with L11 and the large rRNA to form the base of the stalk. The C-terminus forms an elongated spine to which L12 dimers bind in a sequential fashion forming a multimeric L10(L12)X complex.</text>
</comment>
<comment type="similarity">
    <text evidence="1">Belongs to the universal ribosomal protein uL10 family.</text>
</comment>
<dbReference type="EMBL" id="CP001127">
    <property type="protein sequence ID" value="ACF93051.1"/>
    <property type="molecule type" value="Genomic_DNA"/>
</dbReference>
<dbReference type="RefSeq" id="WP_001207203.1">
    <property type="nucleotide sequence ID" value="NC_011094.1"/>
</dbReference>
<dbReference type="GeneID" id="93756505"/>
<dbReference type="KEGG" id="sew:SeSA_A4361"/>
<dbReference type="HOGENOM" id="CLU_092227_0_2_6"/>
<dbReference type="Proteomes" id="UP000001865">
    <property type="component" value="Chromosome"/>
</dbReference>
<dbReference type="GO" id="GO:0015934">
    <property type="term" value="C:large ribosomal subunit"/>
    <property type="evidence" value="ECO:0007669"/>
    <property type="project" value="InterPro"/>
</dbReference>
<dbReference type="GO" id="GO:0070180">
    <property type="term" value="F:large ribosomal subunit rRNA binding"/>
    <property type="evidence" value="ECO:0007669"/>
    <property type="project" value="UniProtKB-UniRule"/>
</dbReference>
<dbReference type="GO" id="GO:0003735">
    <property type="term" value="F:structural constituent of ribosome"/>
    <property type="evidence" value="ECO:0007669"/>
    <property type="project" value="InterPro"/>
</dbReference>
<dbReference type="GO" id="GO:0006412">
    <property type="term" value="P:translation"/>
    <property type="evidence" value="ECO:0007669"/>
    <property type="project" value="UniProtKB-UniRule"/>
</dbReference>
<dbReference type="CDD" id="cd05797">
    <property type="entry name" value="Ribosomal_L10"/>
    <property type="match status" value="1"/>
</dbReference>
<dbReference type="FunFam" id="3.30.70.1730:FF:000001">
    <property type="entry name" value="50S ribosomal protein L10"/>
    <property type="match status" value="1"/>
</dbReference>
<dbReference type="Gene3D" id="3.30.70.1730">
    <property type="match status" value="1"/>
</dbReference>
<dbReference type="Gene3D" id="6.10.250.2350">
    <property type="match status" value="1"/>
</dbReference>
<dbReference type="HAMAP" id="MF_00362">
    <property type="entry name" value="Ribosomal_uL10"/>
    <property type="match status" value="1"/>
</dbReference>
<dbReference type="InterPro" id="IPR001790">
    <property type="entry name" value="Ribosomal_uL10"/>
</dbReference>
<dbReference type="InterPro" id="IPR043141">
    <property type="entry name" value="Ribosomal_uL10-like_sf"/>
</dbReference>
<dbReference type="InterPro" id="IPR022973">
    <property type="entry name" value="Ribosomal_uL10_bac"/>
</dbReference>
<dbReference type="InterPro" id="IPR047865">
    <property type="entry name" value="Ribosomal_uL10_bac_type"/>
</dbReference>
<dbReference type="InterPro" id="IPR002363">
    <property type="entry name" value="Ribosomal_uL10_CS_bac"/>
</dbReference>
<dbReference type="NCBIfam" id="NF000955">
    <property type="entry name" value="PRK00099.1-1"/>
    <property type="match status" value="1"/>
</dbReference>
<dbReference type="PANTHER" id="PTHR11560">
    <property type="entry name" value="39S RIBOSOMAL PROTEIN L10, MITOCHONDRIAL"/>
    <property type="match status" value="1"/>
</dbReference>
<dbReference type="Pfam" id="PF00466">
    <property type="entry name" value="Ribosomal_L10"/>
    <property type="match status" value="1"/>
</dbReference>
<dbReference type="SUPFAM" id="SSF160369">
    <property type="entry name" value="Ribosomal protein L10-like"/>
    <property type="match status" value="1"/>
</dbReference>
<dbReference type="PROSITE" id="PS01109">
    <property type="entry name" value="RIBOSOMAL_L10"/>
    <property type="match status" value="1"/>
</dbReference>
<feature type="chain" id="PRO_1000121013" description="Large ribosomal subunit protein uL10">
    <location>
        <begin position="1"/>
        <end position="165"/>
    </location>
</feature>
<organism>
    <name type="scientific">Salmonella schwarzengrund (strain CVM19633)</name>
    <dbReference type="NCBI Taxonomy" id="439843"/>
    <lineage>
        <taxon>Bacteria</taxon>
        <taxon>Pseudomonadati</taxon>
        <taxon>Pseudomonadota</taxon>
        <taxon>Gammaproteobacteria</taxon>
        <taxon>Enterobacterales</taxon>
        <taxon>Enterobacteriaceae</taxon>
        <taxon>Salmonella</taxon>
    </lineage>
</organism>
<evidence type="ECO:0000255" key="1">
    <source>
        <dbReference type="HAMAP-Rule" id="MF_00362"/>
    </source>
</evidence>
<evidence type="ECO:0000305" key="2"/>
<accession>B4TQJ3</accession>
<protein>
    <recommendedName>
        <fullName evidence="1">Large ribosomal subunit protein uL10</fullName>
    </recommendedName>
    <alternativeName>
        <fullName evidence="2">50S ribosomal protein L10</fullName>
    </alternativeName>
</protein>
<reference key="1">
    <citation type="journal article" date="2011" name="J. Bacteriol.">
        <title>Comparative genomics of 28 Salmonella enterica isolates: evidence for CRISPR-mediated adaptive sublineage evolution.</title>
        <authorList>
            <person name="Fricke W.F."/>
            <person name="Mammel M.K."/>
            <person name="McDermott P.F."/>
            <person name="Tartera C."/>
            <person name="White D.G."/>
            <person name="Leclerc J.E."/>
            <person name="Ravel J."/>
            <person name="Cebula T.A."/>
        </authorList>
    </citation>
    <scope>NUCLEOTIDE SEQUENCE [LARGE SCALE GENOMIC DNA]</scope>
    <source>
        <strain>CVM19633</strain>
    </source>
</reference>
<proteinExistence type="inferred from homology"/>